<feature type="chain" id="PRO_0000151139" description="Undecaprenyl-diphosphatase">
    <location>
        <begin position="1"/>
        <end position="293"/>
    </location>
</feature>
<feature type="transmembrane region" description="Helical" evidence="1">
    <location>
        <begin position="107"/>
        <end position="127"/>
    </location>
</feature>
<feature type="transmembrane region" description="Helical" evidence="1">
    <location>
        <begin position="134"/>
        <end position="154"/>
    </location>
</feature>
<feature type="transmembrane region" description="Helical" evidence="1">
    <location>
        <begin position="207"/>
        <end position="227"/>
    </location>
</feature>
<feature type="transmembrane region" description="Helical" evidence="1">
    <location>
        <begin position="243"/>
        <end position="263"/>
    </location>
</feature>
<feature type="transmembrane region" description="Helical" evidence="1">
    <location>
        <begin position="268"/>
        <end position="288"/>
    </location>
</feature>
<name>UPPP_COREF</name>
<accession>Q8FTC9</accession>
<sequence>MNEQTYLLASAVEPVAAENMSWTQTLVLSVVQGLTEFLPISSSGHLRIISELFWGADAGASFTAVVQLGTEAAVLVYFAREIWQILTGWFAGVFNKDRRGRDYKMGWMIIVATIPVVVLGVLGKDLIRDALRNMWITATVLVLFSFVFILAEKVGKKDRGYDELNMRDALVMGFAQCLALIPGVSRSGGTISAGLFMGLNREVAAKFSFLLAIPAVLGSGLYSLPDAFDPSTGQAASGLQLTIGTLVAFLVGYASIAWLMKFVANHSFSWFAAYRIPAGLLVMLLLWLGYLNP</sequence>
<keyword id="KW-0046">Antibiotic resistance</keyword>
<keyword id="KW-1003">Cell membrane</keyword>
<keyword id="KW-0133">Cell shape</keyword>
<keyword id="KW-0961">Cell wall biogenesis/degradation</keyword>
<keyword id="KW-0378">Hydrolase</keyword>
<keyword id="KW-0472">Membrane</keyword>
<keyword id="KW-0573">Peptidoglycan synthesis</keyword>
<keyword id="KW-1185">Reference proteome</keyword>
<keyword id="KW-0812">Transmembrane</keyword>
<keyword id="KW-1133">Transmembrane helix</keyword>
<protein>
    <recommendedName>
        <fullName evidence="1">Undecaprenyl-diphosphatase</fullName>
        <ecNumber evidence="1">3.6.1.27</ecNumber>
    </recommendedName>
    <alternativeName>
        <fullName evidence="1">Bacitracin resistance protein</fullName>
    </alternativeName>
    <alternativeName>
        <fullName evidence="1">Undecaprenyl pyrophosphate phosphatase</fullName>
    </alternativeName>
</protein>
<organism>
    <name type="scientific">Corynebacterium efficiens (strain DSM 44549 / YS-314 / AJ 12310 / JCM 11189 / NBRC 100395)</name>
    <dbReference type="NCBI Taxonomy" id="196164"/>
    <lineage>
        <taxon>Bacteria</taxon>
        <taxon>Bacillati</taxon>
        <taxon>Actinomycetota</taxon>
        <taxon>Actinomycetes</taxon>
        <taxon>Mycobacteriales</taxon>
        <taxon>Corynebacteriaceae</taxon>
        <taxon>Corynebacterium</taxon>
    </lineage>
</organism>
<gene>
    <name evidence="1" type="primary">uppP</name>
    <name type="synonym">bacA</name>
    <name type="synonym">upk</name>
    <name type="ordered locus">CE1640</name>
</gene>
<dbReference type="EC" id="3.6.1.27" evidence="1"/>
<dbReference type="EMBL" id="BA000035">
    <property type="protein sequence ID" value="BAC18450.1"/>
    <property type="status" value="ALT_INIT"/>
    <property type="molecule type" value="Genomic_DNA"/>
</dbReference>
<dbReference type="SMR" id="Q8FTC9"/>
<dbReference type="STRING" id="196164.gene:10742059"/>
<dbReference type="KEGG" id="cef:CE1640"/>
<dbReference type="eggNOG" id="COG1968">
    <property type="taxonomic scope" value="Bacteria"/>
</dbReference>
<dbReference type="HOGENOM" id="CLU_060296_1_0_11"/>
<dbReference type="OrthoDB" id="9808289at2"/>
<dbReference type="Proteomes" id="UP000001409">
    <property type="component" value="Chromosome"/>
</dbReference>
<dbReference type="GO" id="GO:0005886">
    <property type="term" value="C:plasma membrane"/>
    <property type="evidence" value="ECO:0007669"/>
    <property type="project" value="UniProtKB-SubCell"/>
</dbReference>
<dbReference type="GO" id="GO:0050380">
    <property type="term" value="F:undecaprenyl-diphosphatase activity"/>
    <property type="evidence" value="ECO:0007669"/>
    <property type="project" value="UniProtKB-UniRule"/>
</dbReference>
<dbReference type="GO" id="GO:0071555">
    <property type="term" value="P:cell wall organization"/>
    <property type="evidence" value="ECO:0007669"/>
    <property type="project" value="UniProtKB-KW"/>
</dbReference>
<dbReference type="GO" id="GO:0009252">
    <property type="term" value="P:peptidoglycan biosynthetic process"/>
    <property type="evidence" value="ECO:0007669"/>
    <property type="project" value="UniProtKB-KW"/>
</dbReference>
<dbReference type="GO" id="GO:0008360">
    <property type="term" value="P:regulation of cell shape"/>
    <property type="evidence" value="ECO:0007669"/>
    <property type="project" value="UniProtKB-KW"/>
</dbReference>
<dbReference type="GO" id="GO:0046677">
    <property type="term" value="P:response to antibiotic"/>
    <property type="evidence" value="ECO:0007669"/>
    <property type="project" value="UniProtKB-UniRule"/>
</dbReference>
<dbReference type="HAMAP" id="MF_01006">
    <property type="entry name" value="Undec_diphosphatase"/>
    <property type="match status" value="1"/>
</dbReference>
<dbReference type="InterPro" id="IPR003824">
    <property type="entry name" value="UppP"/>
</dbReference>
<dbReference type="NCBIfam" id="NF001392">
    <property type="entry name" value="PRK00281.2-1"/>
    <property type="match status" value="1"/>
</dbReference>
<dbReference type="NCBIfam" id="TIGR00753">
    <property type="entry name" value="undec_PP_bacA"/>
    <property type="match status" value="1"/>
</dbReference>
<dbReference type="PANTHER" id="PTHR30622">
    <property type="entry name" value="UNDECAPRENYL-DIPHOSPHATASE"/>
    <property type="match status" value="1"/>
</dbReference>
<dbReference type="PANTHER" id="PTHR30622:SF4">
    <property type="entry name" value="UNDECAPRENYL-DIPHOSPHATASE"/>
    <property type="match status" value="1"/>
</dbReference>
<dbReference type="Pfam" id="PF02673">
    <property type="entry name" value="BacA"/>
    <property type="match status" value="1"/>
</dbReference>
<comment type="function">
    <text evidence="1">Catalyzes the dephosphorylation of undecaprenyl diphosphate (UPP). Confers resistance to bacitracin.</text>
</comment>
<comment type="catalytic activity">
    <reaction evidence="1">
        <text>di-trans,octa-cis-undecaprenyl diphosphate + H2O = di-trans,octa-cis-undecaprenyl phosphate + phosphate + H(+)</text>
        <dbReference type="Rhea" id="RHEA:28094"/>
        <dbReference type="ChEBI" id="CHEBI:15377"/>
        <dbReference type="ChEBI" id="CHEBI:15378"/>
        <dbReference type="ChEBI" id="CHEBI:43474"/>
        <dbReference type="ChEBI" id="CHEBI:58405"/>
        <dbReference type="ChEBI" id="CHEBI:60392"/>
        <dbReference type="EC" id="3.6.1.27"/>
    </reaction>
</comment>
<comment type="subcellular location">
    <subcellularLocation>
        <location evidence="1">Cell membrane</location>
        <topology evidence="1">Multi-pass membrane protein</topology>
    </subcellularLocation>
</comment>
<comment type="miscellaneous">
    <text>Bacitracin is thought to be involved in the inhibition of peptidoglycan synthesis by sequestering undecaprenyl diphosphate, thereby reducing the pool of lipid carrier available.</text>
</comment>
<comment type="similarity">
    <text evidence="1">Belongs to the UppP family.</text>
</comment>
<comment type="sequence caution" evidence="2">
    <conflict type="erroneous initiation">
        <sequence resource="EMBL-CDS" id="BAC18450"/>
    </conflict>
</comment>
<evidence type="ECO:0000255" key="1">
    <source>
        <dbReference type="HAMAP-Rule" id="MF_01006"/>
    </source>
</evidence>
<evidence type="ECO:0000305" key="2"/>
<reference key="1">
    <citation type="journal article" date="2003" name="Genome Res.">
        <title>Comparative complete genome sequence analysis of the amino acid replacements responsible for the thermostability of Corynebacterium efficiens.</title>
        <authorList>
            <person name="Nishio Y."/>
            <person name="Nakamura Y."/>
            <person name="Kawarabayasi Y."/>
            <person name="Usuda Y."/>
            <person name="Kimura E."/>
            <person name="Sugimoto S."/>
            <person name="Matsui K."/>
            <person name="Yamagishi A."/>
            <person name="Kikuchi H."/>
            <person name="Ikeo K."/>
            <person name="Gojobori T."/>
        </authorList>
    </citation>
    <scope>NUCLEOTIDE SEQUENCE [LARGE SCALE GENOMIC DNA]</scope>
    <source>
        <strain>DSM 44549 / YS-314 / AJ 12310 / JCM 11189 / NBRC 100395</strain>
    </source>
</reference>
<proteinExistence type="inferred from homology"/>